<organism>
    <name type="scientific">Microcystis aeruginosa (strain NIES-843 / IAM M-2473)</name>
    <dbReference type="NCBI Taxonomy" id="449447"/>
    <lineage>
        <taxon>Bacteria</taxon>
        <taxon>Bacillati</taxon>
        <taxon>Cyanobacteriota</taxon>
        <taxon>Cyanophyceae</taxon>
        <taxon>Oscillatoriophycideae</taxon>
        <taxon>Chroococcales</taxon>
        <taxon>Microcystaceae</taxon>
        <taxon>Microcystis</taxon>
    </lineage>
</organism>
<dbReference type="EC" id="2.4.1.227" evidence="1"/>
<dbReference type="EMBL" id="AP009552">
    <property type="protein sequence ID" value="BAG01996.1"/>
    <property type="molecule type" value="Genomic_DNA"/>
</dbReference>
<dbReference type="RefSeq" id="WP_012265382.1">
    <property type="nucleotide sequence ID" value="NC_010296.1"/>
</dbReference>
<dbReference type="SMR" id="B0JFZ1"/>
<dbReference type="STRING" id="449447.MAE_21740"/>
<dbReference type="CAZy" id="GT28">
    <property type="family name" value="Glycosyltransferase Family 28"/>
</dbReference>
<dbReference type="PaxDb" id="449447-MAE_21740"/>
<dbReference type="EnsemblBacteria" id="BAG01996">
    <property type="protein sequence ID" value="BAG01996"/>
    <property type="gene ID" value="MAE_21740"/>
</dbReference>
<dbReference type="KEGG" id="mar:MAE_21740"/>
<dbReference type="PATRIC" id="fig|449447.4.peg.1988"/>
<dbReference type="eggNOG" id="COG0707">
    <property type="taxonomic scope" value="Bacteria"/>
</dbReference>
<dbReference type="HOGENOM" id="CLU_037404_2_1_3"/>
<dbReference type="BioCyc" id="MAER449447:MAE_RS09485-MONOMER"/>
<dbReference type="UniPathway" id="UPA00219"/>
<dbReference type="Proteomes" id="UP000001510">
    <property type="component" value="Chromosome"/>
</dbReference>
<dbReference type="GO" id="GO:0005886">
    <property type="term" value="C:plasma membrane"/>
    <property type="evidence" value="ECO:0007669"/>
    <property type="project" value="UniProtKB-SubCell"/>
</dbReference>
<dbReference type="GO" id="GO:0051991">
    <property type="term" value="F:UDP-N-acetyl-D-glucosamine:N-acetylmuramoyl-L-alanyl-D-glutamyl-meso-2,6-diaminopimelyl-D-alanyl-D-alanine-diphosphoundecaprenol 4-beta-N-acetylglucosaminlytransferase activity"/>
    <property type="evidence" value="ECO:0007669"/>
    <property type="project" value="RHEA"/>
</dbReference>
<dbReference type="GO" id="GO:0050511">
    <property type="term" value="F:undecaprenyldiphospho-muramoylpentapeptide beta-N-acetylglucosaminyltransferase activity"/>
    <property type="evidence" value="ECO:0007669"/>
    <property type="project" value="UniProtKB-UniRule"/>
</dbReference>
<dbReference type="GO" id="GO:0005975">
    <property type="term" value="P:carbohydrate metabolic process"/>
    <property type="evidence" value="ECO:0007669"/>
    <property type="project" value="InterPro"/>
</dbReference>
<dbReference type="GO" id="GO:0051301">
    <property type="term" value="P:cell division"/>
    <property type="evidence" value="ECO:0007669"/>
    <property type="project" value="UniProtKB-KW"/>
</dbReference>
<dbReference type="GO" id="GO:0071555">
    <property type="term" value="P:cell wall organization"/>
    <property type="evidence" value="ECO:0007669"/>
    <property type="project" value="UniProtKB-KW"/>
</dbReference>
<dbReference type="GO" id="GO:0030259">
    <property type="term" value="P:lipid glycosylation"/>
    <property type="evidence" value="ECO:0007669"/>
    <property type="project" value="UniProtKB-UniRule"/>
</dbReference>
<dbReference type="GO" id="GO:0009252">
    <property type="term" value="P:peptidoglycan biosynthetic process"/>
    <property type="evidence" value="ECO:0007669"/>
    <property type="project" value="UniProtKB-UniRule"/>
</dbReference>
<dbReference type="GO" id="GO:0008360">
    <property type="term" value="P:regulation of cell shape"/>
    <property type="evidence" value="ECO:0007669"/>
    <property type="project" value="UniProtKB-KW"/>
</dbReference>
<dbReference type="CDD" id="cd03785">
    <property type="entry name" value="GT28_MurG"/>
    <property type="match status" value="1"/>
</dbReference>
<dbReference type="Gene3D" id="3.40.50.2000">
    <property type="entry name" value="Glycogen Phosphorylase B"/>
    <property type="match status" value="2"/>
</dbReference>
<dbReference type="HAMAP" id="MF_00033">
    <property type="entry name" value="MurG"/>
    <property type="match status" value="1"/>
</dbReference>
<dbReference type="InterPro" id="IPR006009">
    <property type="entry name" value="GlcNAc_MurG"/>
</dbReference>
<dbReference type="InterPro" id="IPR007235">
    <property type="entry name" value="Glyco_trans_28_C"/>
</dbReference>
<dbReference type="InterPro" id="IPR004276">
    <property type="entry name" value="GlycoTrans_28_N"/>
</dbReference>
<dbReference type="NCBIfam" id="TIGR01133">
    <property type="entry name" value="murG"/>
    <property type="match status" value="1"/>
</dbReference>
<dbReference type="PANTHER" id="PTHR21015:SF22">
    <property type="entry name" value="GLYCOSYLTRANSFERASE"/>
    <property type="match status" value="1"/>
</dbReference>
<dbReference type="PANTHER" id="PTHR21015">
    <property type="entry name" value="UDP-N-ACETYLGLUCOSAMINE--N-ACETYLMURAMYL-(PENTAPEPTIDE) PYROPHOSPHORYL-UNDECAPRENOL N-ACETYLGLUCOSAMINE TRANSFERASE 1"/>
    <property type="match status" value="1"/>
</dbReference>
<dbReference type="Pfam" id="PF04101">
    <property type="entry name" value="Glyco_tran_28_C"/>
    <property type="match status" value="1"/>
</dbReference>
<dbReference type="Pfam" id="PF03033">
    <property type="entry name" value="Glyco_transf_28"/>
    <property type="match status" value="1"/>
</dbReference>
<dbReference type="SUPFAM" id="SSF53756">
    <property type="entry name" value="UDP-Glycosyltransferase/glycogen phosphorylase"/>
    <property type="match status" value="1"/>
</dbReference>
<feature type="chain" id="PRO_1000090450" description="UDP-N-acetylglucosamine--N-acetylmuramyl-(pentapeptide) pyrophosphoryl-undecaprenol N-acetylglucosamine transferase">
    <location>
        <begin position="1"/>
        <end position="357"/>
    </location>
</feature>
<feature type="binding site" evidence="1">
    <location>
        <begin position="15"/>
        <end position="17"/>
    </location>
    <ligand>
        <name>UDP-N-acetyl-alpha-D-glucosamine</name>
        <dbReference type="ChEBI" id="CHEBI:57705"/>
    </ligand>
</feature>
<feature type="binding site" evidence="1">
    <location>
        <position position="124"/>
    </location>
    <ligand>
        <name>UDP-N-acetyl-alpha-D-glucosamine</name>
        <dbReference type="ChEBI" id="CHEBI:57705"/>
    </ligand>
</feature>
<feature type="binding site" evidence="1">
    <location>
        <position position="165"/>
    </location>
    <ligand>
        <name>UDP-N-acetyl-alpha-D-glucosamine</name>
        <dbReference type="ChEBI" id="CHEBI:57705"/>
    </ligand>
</feature>
<feature type="binding site" evidence="1">
    <location>
        <position position="191"/>
    </location>
    <ligand>
        <name>UDP-N-acetyl-alpha-D-glucosamine</name>
        <dbReference type="ChEBI" id="CHEBI:57705"/>
    </ligand>
</feature>
<feature type="binding site" evidence="1">
    <location>
        <position position="285"/>
    </location>
    <ligand>
        <name>UDP-N-acetyl-alpha-D-glucosamine</name>
        <dbReference type="ChEBI" id="CHEBI:57705"/>
    </ligand>
</feature>
<protein>
    <recommendedName>
        <fullName evidence="1">UDP-N-acetylglucosamine--N-acetylmuramyl-(pentapeptide) pyrophosphoryl-undecaprenol N-acetylglucosamine transferase</fullName>
        <ecNumber evidence="1">2.4.1.227</ecNumber>
    </recommendedName>
    <alternativeName>
        <fullName evidence="1">Undecaprenyl-PP-MurNAc-pentapeptide-UDPGlcNAc GlcNAc transferase</fullName>
    </alternativeName>
</protein>
<gene>
    <name evidence="1" type="primary">murG</name>
    <name type="ordered locus">MAE_21740</name>
</gene>
<accession>B0JFZ1</accession>
<proteinExistence type="inferred from homology"/>
<keyword id="KW-0131">Cell cycle</keyword>
<keyword id="KW-0132">Cell division</keyword>
<keyword id="KW-0997">Cell inner membrane</keyword>
<keyword id="KW-1003">Cell membrane</keyword>
<keyword id="KW-0133">Cell shape</keyword>
<keyword id="KW-0961">Cell wall biogenesis/degradation</keyword>
<keyword id="KW-0328">Glycosyltransferase</keyword>
<keyword id="KW-0472">Membrane</keyword>
<keyword id="KW-0573">Peptidoglycan synthesis</keyword>
<keyword id="KW-0808">Transferase</keyword>
<comment type="function">
    <text evidence="1">Cell wall formation. Catalyzes the transfer of a GlcNAc subunit on undecaprenyl-pyrophosphoryl-MurNAc-pentapeptide (lipid intermediate I) to form undecaprenyl-pyrophosphoryl-MurNAc-(pentapeptide)GlcNAc (lipid intermediate II).</text>
</comment>
<comment type="catalytic activity">
    <reaction evidence="1">
        <text>di-trans,octa-cis-undecaprenyl diphospho-N-acetyl-alpha-D-muramoyl-L-alanyl-D-glutamyl-meso-2,6-diaminopimeloyl-D-alanyl-D-alanine + UDP-N-acetyl-alpha-D-glucosamine = di-trans,octa-cis-undecaprenyl diphospho-[N-acetyl-alpha-D-glucosaminyl-(1-&gt;4)]-N-acetyl-alpha-D-muramoyl-L-alanyl-D-glutamyl-meso-2,6-diaminopimeloyl-D-alanyl-D-alanine + UDP + H(+)</text>
        <dbReference type="Rhea" id="RHEA:31227"/>
        <dbReference type="ChEBI" id="CHEBI:15378"/>
        <dbReference type="ChEBI" id="CHEBI:57705"/>
        <dbReference type="ChEBI" id="CHEBI:58223"/>
        <dbReference type="ChEBI" id="CHEBI:61387"/>
        <dbReference type="ChEBI" id="CHEBI:61388"/>
        <dbReference type="EC" id="2.4.1.227"/>
    </reaction>
</comment>
<comment type="pathway">
    <text evidence="1">Cell wall biogenesis; peptidoglycan biosynthesis.</text>
</comment>
<comment type="subcellular location">
    <subcellularLocation>
        <location evidence="1">Cell inner membrane</location>
        <topology evidence="1">Peripheral membrane protein</topology>
        <orientation evidence="1">Cytoplasmic side</orientation>
    </subcellularLocation>
</comment>
<comment type="similarity">
    <text evidence="1">Belongs to the glycosyltransferase 28 family. MurG subfamily.</text>
</comment>
<reference key="1">
    <citation type="journal article" date="2007" name="DNA Res.">
        <title>Complete genomic structure of the bloom-forming toxic cyanobacterium Microcystis aeruginosa NIES-843.</title>
        <authorList>
            <person name="Kaneko T."/>
            <person name="Nakajima N."/>
            <person name="Okamoto S."/>
            <person name="Suzuki I."/>
            <person name="Tanabe Y."/>
            <person name="Tamaoki M."/>
            <person name="Nakamura Y."/>
            <person name="Kasai F."/>
            <person name="Watanabe A."/>
            <person name="Kawashima K."/>
            <person name="Kishida Y."/>
            <person name="Ono A."/>
            <person name="Shimizu Y."/>
            <person name="Takahashi C."/>
            <person name="Minami C."/>
            <person name="Fujishiro T."/>
            <person name="Kohara M."/>
            <person name="Katoh M."/>
            <person name="Nakazaki N."/>
            <person name="Nakayama S."/>
            <person name="Yamada M."/>
            <person name="Tabata S."/>
            <person name="Watanabe M.M."/>
        </authorList>
    </citation>
    <scope>NUCLEOTIDE SEQUENCE [LARGE SCALE GENOMIC DNA]</scope>
    <source>
        <strain>NIES-843 / IAM M-247</strain>
    </source>
</reference>
<name>MURG_MICAN</name>
<sequence>MARTPTRLLIAASGTGGHLFPALALAERLPDYEIEWLGVPDRLEQSLVPKTYPLHTIPIEGFQTRLGLKTLKILFSQLRAIWQVRSLIKKRQIAAVFTTGGYIAGPTILAARLANIPVILHESNYIPGKVTKVLGRWCDTVALGFQGTASYLPGTRTTWVSTPVREQFLIPQSLDLPIPETAFLIVVAGGSQGAVALNQLVRQSAPQWLEKGIYIVHLTGENDPEADSLRHSNYFSQPFYDNMAGLWQRANLAISRSGASTLTELAITCTPSILIPYPFAAEDHQFYNAQVFAEAQAAYLYRQNELTAQFLSELVLDLWSNPEKLAAMAQQASHLAISDSADLLADLLRRKSQKDSF</sequence>
<evidence type="ECO:0000255" key="1">
    <source>
        <dbReference type="HAMAP-Rule" id="MF_00033"/>
    </source>
</evidence>